<accession>Q9CQ54</accession>
<accession>Q3TLB2</accession>
<protein>
    <recommendedName>
        <fullName evidence="4">NADH dehydrogenase [ubiquinone] 1 subunit C2</fullName>
    </recommendedName>
    <alternativeName>
        <fullName>Complex I-B14.5b</fullName>
        <shortName>CI-B14.5b</shortName>
    </alternativeName>
    <alternativeName>
        <fullName>NADH-ubiquinone oxidoreductase subunit B14.5b</fullName>
    </alternativeName>
</protein>
<keyword id="KW-0002">3D-structure</keyword>
<keyword id="KW-0903">Direct protein sequencing</keyword>
<keyword id="KW-0249">Electron transport</keyword>
<keyword id="KW-0472">Membrane</keyword>
<keyword id="KW-0496">Mitochondrion</keyword>
<keyword id="KW-0999">Mitochondrion inner membrane</keyword>
<keyword id="KW-1185">Reference proteome</keyword>
<keyword id="KW-0679">Respiratory chain</keyword>
<keyword id="KW-0812">Transmembrane</keyword>
<keyword id="KW-1133">Transmembrane helix</keyword>
<keyword id="KW-0813">Transport</keyword>
<organism>
    <name type="scientific">Mus musculus</name>
    <name type="common">Mouse</name>
    <dbReference type="NCBI Taxonomy" id="10090"/>
    <lineage>
        <taxon>Eukaryota</taxon>
        <taxon>Metazoa</taxon>
        <taxon>Chordata</taxon>
        <taxon>Craniata</taxon>
        <taxon>Vertebrata</taxon>
        <taxon>Euteleostomi</taxon>
        <taxon>Mammalia</taxon>
        <taxon>Eutheria</taxon>
        <taxon>Euarchontoglires</taxon>
        <taxon>Glires</taxon>
        <taxon>Rodentia</taxon>
        <taxon>Myomorpha</taxon>
        <taxon>Muroidea</taxon>
        <taxon>Muridae</taxon>
        <taxon>Murinae</taxon>
        <taxon>Mus</taxon>
        <taxon>Mus</taxon>
    </lineage>
</organism>
<comment type="function">
    <text evidence="3">Accessory subunit of the mitochondrial membrane respiratory chain NADH dehydrogenase (Complex I), that is believed not to be involved in catalysis but required for the complex assembly. Complex I functions in the transfer of electrons from NADH to the respiratory chain. The immediate electron acceptor for the enzyme is believed to be ubiquinone.</text>
</comment>
<comment type="subunit">
    <text evidence="1 3">Complex I is composed of 45 different subunits (PubMed:38575788). Interacts with TMEM242 (By similarity).</text>
</comment>
<comment type="subcellular location">
    <subcellularLocation>
        <location evidence="3">Mitochondrion inner membrane</location>
        <topology evidence="2">Single-pass membrane protein</topology>
        <orientation evidence="3">Matrix side</orientation>
    </subcellularLocation>
</comment>
<comment type="similarity">
    <text evidence="4">Belongs to the complex I NDUFC2 subunit family.</text>
</comment>
<sequence length="120" mass="14164">MMNGRPGHEPLKFLPDEARSLPPPKLNDPRLVYMGLLGYCTGLMDNMLRMRPVMRAGLHRQLLFVTSFVFAGYFYLKRQNYLYAVKDHDMFGYIKLHPEDFPEKEKKTYAEILEPFHPVR</sequence>
<reference key="1">
    <citation type="journal article" date="2005" name="Science">
        <title>The transcriptional landscape of the mammalian genome.</title>
        <authorList>
            <person name="Carninci P."/>
            <person name="Kasukawa T."/>
            <person name="Katayama S."/>
            <person name="Gough J."/>
            <person name="Frith M.C."/>
            <person name="Maeda N."/>
            <person name="Oyama R."/>
            <person name="Ravasi T."/>
            <person name="Lenhard B."/>
            <person name="Wells C."/>
            <person name="Kodzius R."/>
            <person name="Shimokawa K."/>
            <person name="Bajic V.B."/>
            <person name="Brenner S.E."/>
            <person name="Batalov S."/>
            <person name="Forrest A.R."/>
            <person name="Zavolan M."/>
            <person name="Davis M.J."/>
            <person name="Wilming L.G."/>
            <person name="Aidinis V."/>
            <person name="Allen J.E."/>
            <person name="Ambesi-Impiombato A."/>
            <person name="Apweiler R."/>
            <person name="Aturaliya R.N."/>
            <person name="Bailey T.L."/>
            <person name="Bansal M."/>
            <person name="Baxter L."/>
            <person name="Beisel K.W."/>
            <person name="Bersano T."/>
            <person name="Bono H."/>
            <person name="Chalk A.M."/>
            <person name="Chiu K.P."/>
            <person name="Choudhary V."/>
            <person name="Christoffels A."/>
            <person name="Clutterbuck D.R."/>
            <person name="Crowe M.L."/>
            <person name="Dalla E."/>
            <person name="Dalrymple B.P."/>
            <person name="de Bono B."/>
            <person name="Della Gatta G."/>
            <person name="di Bernardo D."/>
            <person name="Down T."/>
            <person name="Engstrom P."/>
            <person name="Fagiolini M."/>
            <person name="Faulkner G."/>
            <person name="Fletcher C.F."/>
            <person name="Fukushima T."/>
            <person name="Furuno M."/>
            <person name="Futaki S."/>
            <person name="Gariboldi M."/>
            <person name="Georgii-Hemming P."/>
            <person name="Gingeras T.R."/>
            <person name="Gojobori T."/>
            <person name="Green R.E."/>
            <person name="Gustincich S."/>
            <person name="Harbers M."/>
            <person name="Hayashi Y."/>
            <person name="Hensch T.K."/>
            <person name="Hirokawa N."/>
            <person name="Hill D."/>
            <person name="Huminiecki L."/>
            <person name="Iacono M."/>
            <person name="Ikeo K."/>
            <person name="Iwama A."/>
            <person name="Ishikawa T."/>
            <person name="Jakt M."/>
            <person name="Kanapin A."/>
            <person name="Katoh M."/>
            <person name="Kawasawa Y."/>
            <person name="Kelso J."/>
            <person name="Kitamura H."/>
            <person name="Kitano H."/>
            <person name="Kollias G."/>
            <person name="Krishnan S.P."/>
            <person name="Kruger A."/>
            <person name="Kummerfeld S.K."/>
            <person name="Kurochkin I.V."/>
            <person name="Lareau L.F."/>
            <person name="Lazarevic D."/>
            <person name="Lipovich L."/>
            <person name="Liu J."/>
            <person name="Liuni S."/>
            <person name="McWilliam S."/>
            <person name="Madan Babu M."/>
            <person name="Madera M."/>
            <person name="Marchionni L."/>
            <person name="Matsuda H."/>
            <person name="Matsuzawa S."/>
            <person name="Miki H."/>
            <person name="Mignone F."/>
            <person name="Miyake S."/>
            <person name="Morris K."/>
            <person name="Mottagui-Tabar S."/>
            <person name="Mulder N."/>
            <person name="Nakano N."/>
            <person name="Nakauchi H."/>
            <person name="Ng P."/>
            <person name="Nilsson R."/>
            <person name="Nishiguchi S."/>
            <person name="Nishikawa S."/>
            <person name="Nori F."/>
            <person name="Ohara O."/>
            <person name="Okazaki Y."/>
            <person name="Orlando V."/>
            <person name="Pang K.C."/>
            <person name="Pavan W.J."/>
            <person name="Pavesi G."/>
            <person name="Pesole G."/>
            <person name="Petrovsky N."/>
            <person name="Piazza S."/>
            <person name="Reed J."/>
            <person name="Reid J.F."/>
            <person name="Ring B.Z."/>
            <person name="Ringwald M."/>
            <person name="Rost B."/>
            <person name="Ruan Y."/>
            <person name="Salzberg S.L."/>
            <person name="Sandelin A."/>
            <person name="Schneider C."/>
            <person name="Schoenbach C."/>
            <person name="Sekiguchi K."/>
            <person name="Semple C.A."/>
            <person name="Seno S."/>
            <person name="Sessa L."/>
            <person name="Sheng Y."/>
            <person name="Shibata Y."/>
            <person name="Shimada H."/>
            <person name="Shimada K."/>
            <person name="Silva D."/>
            <person name="Sinclair B."/>
            <person name="Sperling S."/>
            <person name="Stupka E."/>
            <person name="Sugiura K."/>
            <person name="Sultana R."/>
            <person name="Takenaka Y."/>
            <person name="Taki K."/>
            <person name="Tammoja K."/>
            <person name="Tan S.L."/>
            <person name="Tang S."/>
            <person name="Taylor M.S."/>
            <person name="Tegner J."/>
            <person name="Teichmann S.A."/>
            <person name="Ueda H.R."/>
            <person name="van Nimwegen E."/>
            <person name="Verardo R."/>
            <person name="Wei C.L."/>
            <person name="Yagi K."/>
            <person name="Yamanishi H."/>
            <person name="Zabarovsky E."/>
            <person name="Zhu S."/>
            <person name="Zimmer A."/>
            <person name="Hide W."/>
            <person name="Bult C."/>
            <person name="Grimmond S.M."/>
            <person name="Teasdale R.D."/>
            <person name="Liu E.T."/>
            <person name="Brusic V."/>
            <person name="Quackenbush J."/>
            <person name="Wahlestedt C."/>
            <person name="Mattick J.S."/>
            <person name="Hume D.A."/>
            <person name="Kai C."/>
            <person name="Sasaki D."/>
            <person name="Tomaru Y."/>
            <person name="Fukuda S."/>
            <person name="Kanamori-Katayama M."/>
            <person name="Suzuki M."/>
            <person name="Aoki J."/>
            <person name="Arakawa T."/>
            <person name="Iida J."/>
            <person name="Imamura K."/>
            <person name="Itoh M."/>
            <person name="Kato T."/>
            <person name="Kawaji H."/>
            <person name="Kawagashira N."/>
            <person name="Kawashima T."/>
            <person name="Kojima M."/>
            <person name="Kondo S."/>
            <person name="Konno H."/>
            <person name="Nakano K."/>
            <person name="Ninomiya N."/>
            <person name="Nishio T."/>
            <person name="Okada M."/>
            <person name="Plessy C."/>
            <person name="Shibata K."/>
            <person name="Shiraki T."/>
            <person name="Suzuki S."/>
            <person name="Tagami M."/>
            <person name="Waki K."/>
            <person name="Watahiki A."/>
            <person name="Okamura-Oho Y."/>
            <person name="Suzuki H."/>
            <person name="Kawai J."/>
            <person name="Hayashizaki Y."/>
        </authorList>
    </citation>
    <scope>NUCLEOTIDE SEQUENCE [LARGE SCALE MRNA]</scope>
    <source>
        <strain>C57BL/6J</strain>
        <tissue>Bone marrow</tissue>
        <tissue>Kidney</tissue>
        <tissue>Pancreas</tissue>
        <tissue>Stomach</tissue>
    </source>
</reference>
<reference key="2">
    <citation type="journal article" date="2004" name="Genome Res.">
        <title>The status, quality, and expansion of the NIH full-length cDNA project: the Mammalian Gene Collection (MGC).</title>
        <authorList>
            <consortium name="The MGC Project Team"/>
        </authorList>
    </citation>
    <scope>NUCLEOTIDE SEQUENCE [LARGE SCALE MRNA]</scope>
    <source>
        <tissue>Mammary gland</tissue>
    </source>
</reference>
<reference key="3">
    <citation type="submission" date="2007-04" db="UniProtKB">
        <authorList>
            <person name="Lubec G."/>
            <person name="Kang S.U."/>
        </authorList>
    </citation>
    <scope>PROTEIN SEQUENCE OF 31-49; 79-104 AND 107-120</scope>
    <scope>IDENTIFICATION BY MASS SPECTROMETRY</scope>
    <source>
        <strain>C57BL/6J</strain>
        <tissue>Brain</tissue>
    </source>
</reference>
<reference key="4">
    <citation type="journal article" date="2010" name="Cell">
        <title>A tissue-specific atlas of mouse protein phosphorylation and expression.</title>
        <authorList>
            <person name="Huttlin E.L."/>
            <person name="Jedrychowski M.P."/>
            <person name="Elias J.E."/>
            <person name="Goswami T."/>
            <person name="Rad R."/>
            <person name="Beausoleil S.A."/>
            <person name="Villen J."/>
            <person name="Haas W."/>
            <person name="Sowa M.E."/>
            <person name="Gygi S.P."/>
        </authorList>
    </citation>
    <scope>IDENTIFICATION BY MASS SPECTROMETRY [LARGE SCALE ANALYSIS]</scope>
    <source>
        <tissue>Brain</tissue>
        <tissue>Brown adipose tissue</tissue>
        <tissue>Heart</tissue>
        <tissue>Kidney</tissue>
        <tissue>Liver</tissue>
        <tissue>Lung</tissue>
        <tissue>Pancreas</tissue>
        <tissue>Spleen</tissue>
        <tissue>Testis</tissue>
    </source>
</reference>
<reference evidence="6" key="5">
    <citation type="journal article" date="2024" name="Nat. Struct. Mol. Biol.">
        <title>SCAF1 drives the compositional diversity of mammalian respirasomes.</title>
        <authorList>
            <person name="Vercellino I."/>
            <person name="Sazanov L.A."/>
        </authorList>
    </citation>
    <scope>STRUCTURE BY ELECTRON MICROSCOPY (3.60 ANGSTROMS) IN COMPLEX WITH MITOCHONDRIAL RESPIRATORY SUPERCOMPLEX</scope>
    <scope>FUNCTION</scope>
    <scope>SUBCELLULAR LOCATION</scope>
    <scope>SUBUNIT</scope>
</reference>
<name>NDUC2_MOUSE</name>
<gene>
    <name evidence="5" type="primary">Ndufc2</name>
</gene>
<dbReference type="EMBL" id="AK002373">
    <property type="protein sequence ID" value="BAB22050.1"/>
    <property type="molecule type" value="mRNA"/>
</dbReference>
<dbReference type="EMBL" id="AK008889">
    <property type="protein sequence ID" value="BAB25955.1"/>
    <property type="molecule type" value="mRNA"/>
</dbReference>
<dbReference type="EMBL" id="AK019002">
    <property type="protein sequence ID" value="BAB31504.1"/>
    <property type="molecule type" value="mRNA"/>
</dbReference>
<dbReference type="EMBL" id="AK153547">
    <property type="protein sequence ID" value="BAE32084.1"/>
    <property type="molecule type" value="mRNA"/>
</dbReference>
<dbReference type="EMBL" id="AK166594">
    <property type="protein sequence ID" value="BAE38880.1"/>
    <property type="molecule type" value="mRNA"/>
</dbReference>
<dbReference type="EMBL" id="AK168342">
    <property type="protein sequence ID" value="BAE40279.1"/>
    <property type="molecule type" value="mRNA"/>
</dbReference>
<dbReference type="EMBL" id="BC002097">
    <property type="protein sequence ID" value="AAH02097.1"/>
    <property type="molecule type" value="mRNA"/>
</dbReference>
<dbReference type="CCDS" id="CCDS21457.1"/>
<dbReference type="RefSeq" id="NP_077182.1">
    <property type="nucleotide sequence ID" value="NM_024220.2"/>
</dbReference>
<dbReference type="PDB" id="6G2J">
    <property type="method" value="EM"/>
    <property type="resolution" value="3.30 A"/>
    <property type="chains" value="d=1-120"/>
</dbReference>
<dbReference type="PDB" id="6G72">
    <property type="method" value="EM"/>
    <property type="resolution" value="3.90 A"/>
    <property type="chains" value="d=1-120"/>
</dbReference>
<dbReference type="PDB" id="6ZR2">
    <property type="method" value="EM"/>
    <property type="resolution" value="3.10 A"/>
    <property type="chains" value="d=1-120"/>
</dbReference>
<dbReference type="PDB" id="6ZTQ">
    <property type="method" value="EM"/>
    <property type="resolution" value="3.00 A"/>
    <property type="chains" value="d=1-120"/>
</dbReference>
<dbReference type="PDB" id="7AK5">
    <property type="method" value="EM"/>
    <property type="resolution" value="3.17 A"/>
    <property type="chains" value="d=1-120"/>
</dbReference>
<dbReference type="PDB" id="7AK6">
    <property type="method" value="EM"/>
    <property type="resolution" value="3.82 A"/>
    <property type="chains" value="d=1-120"/>
</dbReference>
<dbReference type="PDB" id="7B93">
    <property type="method" value="EM"/>
    <property type="resolution" value="3.04 A"/>
    <property type="chains" value="d=1-120"/>
</dbReference>
<dbReference type="PDB" id="7PSA">
    <property type="method" value="EM"/>
    <property type="resolution" value="3.40 A"/>
    <property type="chains" value="d=1-120"/>
</dbReference>
<dbReference type="PDB" id="8C2S">
    <property type="method" value="EM"/>
    <property type="resolution" value="3.90 A"/>
    <property type="chains" value="d=1-120"/>
</dbReference>
<dbReference type="PDB" id="8CA3">
    <property type="method" value="EM"/>
    <property type="resolution" value="3.20 A"/>
    <property type="chains" value="d=1-120"/>
</dbReference>
<dbReference type="PDB" id="8CA5">
    <property type="method" value="EM"/>
    <property type="resolution" value="3.90 A"/>
    <property type="chains" value="d=1-120"/>
</dbReference>
<dbReference type="PDB" id="8IAO">
    <property type="method" value="EM"/>
    <property type="resolution" value="4.20 A"/>
    <property type="chains" value="d=1-120"/>
</dbReference>
<dbReference type="PDB" id="8IAQ">
    <property type="method" value="EM"/>
    <property type="resolution" value="3.40 A"/>
    <property type="chains" value="d=1-120"/>
</dbReference>
<dbReference type="PDB" id="8IB4">
    <property type="method" value="EM"/>
    <property type="resolution" value="4.30 A"/>
    <property type="chains" value="d=1-120"/>
</dbReference>
<dbReference type="PDB" id="8IB6">
    <property type="method" value="EM"/>
    <property type="resolution" value="3.30 A"/>
    <property type="chains" value="d=1-120"/>
</dbReference>
<dbReference type="PDB" id="8IB9">
    <property type="method" value="EM"/>
    <property type="resolution" value="4.30 A"/>
    <property type="chains" value="d=1-120"/>
</dbReference>
<dbReference type="PDB" id="8IBB">
    <property type="method" value="EM"/>
    <property type="resolution" value="3.30 A"/>
    <property type="chains" value="d=1-120"/>
</dbReference>
<dbReference type="PDB" id="8IBD">
    <property type="method" value="EM"/>
    <property type="resolution" value="4.20 A"/>
    <property type="chains" value="d=1-120"/>
</dbReference>
<dbReference type="PDB" id="8IBF">
    <property type="method" value="EM"/>
    <property type="resolution" value="3.30 A"/>
    <property type="chains" value="d=1-120"/>
</dbReference>
<dbReference type="PDB" id="8IC2">
    <property type="method" value="EM"/>
    <property type="resolution" value="6.30 A"/>
    <property type="chains" value="d=1-120"/>
</dbReference>
<dbReference type="PDB" id="8IC4">
    <property type="method" value="EM"/>
    <property type="resolution" value="3.20 A"/>
    <property type="chains" value="d=1-120"/>
</dbReference>
<dbReference type="PDB" id="8OLT">
    <property type="method" value="EM"/>
    <property type="resolution" value="2.84 A"/>
    <property type="chains" value="d=1-120"/>
</dbReference>
<dbReference type="PDB" id="8OM1">
    <property type="method" value="EM"/>
    <property type="resolution" value="2.39 A"/>
    <property type="chains" value="d=1-120"/>
</dbReference>
<dbReference type="PDB" id="8PW5">
    <property type="method" value="EM"/>
    <property type="resolution" value="3.60 A"/>
    <property type="chains" value="d1=1-120"/>
</dbReference>
<dbReference type="PDB" id="8PW6">
    <property type="method" value="EM"/>
    <property type="resolution" value="3.30 A"/>
    <property type="chains" value="d1=1-120"/>
</dbReference>
<dbReference type="PDB" id="8PW7">
    <property type="method" value="EM"/>
    <property type="resolution" value="3.50 A"/>
    <property type="chains" value="d1=1-120"/>
</dbReference>
<dbReference type="PDB" id="8RGP">
    <property type="method" value="EM"/>
    <property type="resolution" value="3.00 A"/>
    <property type="chains" value="d=1-120"/>
</dbReference>
<dbReference type="PDB" id="8RGQ">
    <property type="method" value="EM"/>
    <property type="resolution" value="3.00 A"/>
    <property type="chains" value="d=1-120"/>
</dbReference>
<dbReference type="PDB" id="8RGR">
    <property type="method" value="EM"/>
    <property type="resolution" value="2.90 A"/>
    <property type="chains" value="d=1-120"/>
</dbReference>
<dbReference type="PDB" id="8RGT">
    <property type="method" value="EM"/>
    <property type="resolution" value="3.10 A"/>
    <property type="chains" value="d=1-120"/>
</dbReference>
<dbReference type="PDB" id="8UCA">
    <property type="method" value="EM"/>
    <property type="resolution" value="3.70 A"/>
    <property type="chains" value="C2/c2=1-120"/>
</dbReference>
<dbReference type="PDBsum" id="6G2J"/>
<dbReference type="PDBsum" id="6G72"/>
<dbReference type="PDBsum" id="6ZR2"/>
<dbReference type="PDBsum" id="6ZTQ"/>
<dbReference type="PDBsum" id="7AK5"/>
<dbReference type="PDBsum" id="7AK6"/>
<dbReference type="PDBsum" id="7B93"/>
<dbReference type="PDBsum" id="7PSA"/>
<dbReference type="PDBsum" id="8C2S"/>
<dbReference type="PDBsum" id="8CA3"/>
<dbReference type="PDBsum" id="8CA5"/>
<dbReference type="PDBsum" id="8IAO"/>
<dbReference type="PDBsum" id="8IAQ"/>
<dbReference type="PDBsum" id="8IB4"/>
<dbReference type="PDBsum" id="8IB6"/>
<dbReference type="PDBsum" id="8IB9"/>
<dbReference type="PDBsum" id="8IBB"/>
<dbReference type="PDBsum" id="8IBD"/>
<dbReference type="PDBsum" id="8IBF"/>
<dbReference type="PDBsum" id="8IC2"/>
<dbReference type="PDBsum" id="8IC4"/>
<dbReference type="PDBsum" id="8OLT"/>
<dbReference type="PDBsum" id="8OM1"/>
<dbReference type="PDBsum" id="8PW5"/>
<dbReference type="PDBsum" id="8PW6"/>
<dbReference type="PDBsum" id="8PW7"/>
<dbReference type="PDBsum" id="8RGP"/>
<dbReference type="PDBsum" id="8RGQ"/>
<dbReference type="PDBsum" id="8RGR"/>
<dbReference type="PDBsum" id="8RGT"/>
<dbReference type="PDBsum" id="8UCA"/>
<dbReference type="EMDB" id="EMD-11377"/>
<dbReference type="EMDB" id="EMD-11424"/>
<dbReference type="EMDB" id="EMD-11810"/>
<dbReference type="EMDB" id="EMD-11811"/>
<dbReference type="EMDB" id="EMD-12095"/>
<dbReference type="EMDB" id="EMD-13611"/>
<dbReference type="EMDB" id="EMD-16398"/>
<dbReference type="EMDB" id="EMD-16516"/>
<dbReference type="EMDB" id="EMD-16518"/>
<dbReference type="EMDB" id="EMD-16962"/>
<dbReference type="EMDB" id="EMD-16965"/>
<dbReference type="EMDB" id="EMD-17989"/>
<dbReference type="EMDB" id="EMD-17990"/>
<dbReference type="EMDB" id="EMD-17991"/>
<dbReference type="EMDB" id="EMD-19145"/>
<dbReference type="EMDB" id="EMD-19146"/>
<dbReference type="EMDB" id="EMD-19147"/>
<dbReference type="EMDB" id="EMD-19148"/>
<dbReference type="EMDB" id="EMD-35313"/>
<dbReference type="EMDB" id="EMD-35315"/>
<dbReference type="EMDB" id="EMD-35331"/>
<dbReference type="EMDB" id="EMD-35333"/>
<dbReference type="EMDB" id="EMD-35336"/>
<dbReference type="EMDB" id="EMD-35338"/>
<dbReference type="EMDB" id="EMD-35340"/>
<dbReference type="EMDB" id="EMD-35342"/>
<dbReference type="EMDB" id="EMD-35352"/>
<dbReference type="EMDB" id="EMD-35354"/>
<dbReference type="EMDB" id="EMD-42122"/>
<dbReference type="EMDB" id="EMD-4345"/>
<dbReference type="EMDB" id="EMD-4356"/>
<dbReference type="SMR" id="Q9CQ54"/>
<dbReference type="BioGRID" id="212722">
    <property type="interactions" value="55"/>
</dbReference>
<dbReference type="ComplexPortal" id="CPX-266">
    <property type="entry name" value="Mitochondrial respiratory chain complex I"/>
</dbReference>
<dbReference type="CORUM" id="Q9CQ54"/>
<dbReference type="FunCoup" id="Q9CQ54">
    <property type="interactions" value="1583"/>
</dbReference>
<dbReference type="IntAct" id="Q9CQ54">
    <property type="interactions" value="3"/>
</dbReference>
<dbReference type="STRING" id="10090.ENSMUSP00000032882"/>
<dbReference type="GlyGen" id="Q9CQ54">
    <property type="glycosylation" value="1 site, 1 O-linked glycan (1 site)"/>
</dbReference>
<dbReference type="iPTMnet" id="Q9CQ54"/>
<dbReference type="PhosphoSitePlus" id="Q9CQ54"/>
<dbReference type="SwissPalm" id="Q9CQ54"/>
<dbReference type="jPOST" id="Q9CQ54"/>
<dbReference type="PaxDb" id="10090-ENSMUSP00000032882"/>
<dbReference type="PeptideAtlas" id="Q9CQ54"/>
<dbReference type="ProteomicsDB" id="287469"/>
<dbReference type="Pumba" id="Q9CQ54"/>
<dbReference type="DNASU" id="68197"/>
<dbReference type="Ensembl" id="ENSMUST00000032882.9">
    <property type="protein sequence ID" value="ENSMUSP00000032882.9"/>
    <property type="gene ID" value="ENSMUSG00000030647.9"/>
</dbReference>
<dbReference type="GeneID" id="68197"/>
<dbReference type="KEGG" id="mmu:68197"/>
<dbReference type="UCSC" id="uc009ijd.2">
    <property type="organism name" value="mouse"/>
</dbReference>
<dbReference type="AGR" id="MGI:1344370"/>
<dbReference type="CTD" id="4718"/>
<dbReference type="MGI" id="MGI:1344370">
    <property type="gene designation" value="Ndufc2"/>
</dbReference>
<dbReference type="VEuPathDB" id="HostDB:ENSMUSG00000030647"/>
<dbReference type="eggNOG" id="KOG4516">
    <property type="taxonomic scope" value="Eukaryota"/>
</dbReference>
<dbReference type="GeneTree" id="ENSGT00390000010352"/>
<dbReference type="HOGENOM" id="CLU_156652_0_0_1"/>
<dbReference type="InParanoid" id="Q9CQ54"/>
<dbReference type="OMA" id="WFIGYHI"/>
<dbReference type="OrthoDB" id="6329847at2759"/>
<dbReference type="PhylomeDB" id="Q9CQ54"/>
<dbReference type="TreeFam" id="TF314723"/>
<dbReference type="Reactome" id="R-MMU-611105">
    <property type="pathway name" value="Respiratory electron transport"/>
</dbReference>
<dbReference type="Reactome" id="R-MMU-6798695">
    <property type="pathway name" value="Neutrophil degranulation"/>
</dbReference>
<dbReference type="Reactome" id="R-MMU-6799198">
    <property type="pathway name" value="Complex I biogenesis"/>
</dbReference>
<dbReference type="BioGRID-ORCS" id="68197">
    <property type="hits" value="21 hits in 78 CRISPR screens"/>
</dbReference>
<dbReference type="ChiTaRS" id="Ndufc2">
    <property type="organism name" value="mouse"/>
</dbReference>
<dbReference type="PRO" id="PR:Q9CQ54"/>
<dbReference type="Proteomes" id="UP000000589">
    <property type="component" value="Chromosome 7"/>
</dbReference>
<dbReference type="RNAct" id="Q9CQ54">
    <property type="molecule type" value="protein"/>
</dbReference>
<dbReference type="Bgee" id="ENSMUSG00000030647">
    <property type="expression patterns" value="Expressed in facial nucleus and 245 other cell types or tissues"/>
</dbReference>
<dbReference type="ExpressionAtlas" id="Q9CQ54">
    <property type="expression patterns" value="baseline and differential"/>
</dbReference>
<dbReference type="GO" id="GO:0005743">
    <property type="term" value="C:mitochondrial inner membrane"/>
    <property type="evidence" value="ECO:0000314"/>
    <property type="project" value="UniProtKB"/>
</dbReference>
<dbReference type="GO" id="GO:0005739">
    <property type="term" value="C:mitochondrion"/>
    <property type="evidence" value="ECO:0007005"/>
    <property type="project" value="MGI"/>
</dbReference>
<dbReference type="GO" id="GO:0045271">
    <property type="term" value="C:respiratory chain complex I"/>
    <property type="evidence" value="ECO:0000314"/>
    <property type="project" value="UniProtKB"/>
</dbReference>
<dbReference type="GO" id="GO:0009060">
    <property type="term" value="P:aerobic respiration"/>
    <property type="evidence" value="ECO:0000303"/>
    <property type="project" value="ComplexPortal"/>
</dbReference>
<dbReference type="GO" id="GO:0006120">
    <property type="term" value="P:mitochondrial electron transport, NADH to ubiquinone"/>
    <property type="evidence" value="ECO:0007669"/>
    <property type="project" value="InterPro"/>
</dbReference>
<dbReference type="GO" id="GO:0032981">
    <property type="term" value="P:mitochondrial respiratory chain complex I assembly"/>
    <property type="evidence" value="ECO:0007669"/>
    <property type="project" value="Ensembl"/>
</dbReference>
<dbReference type="GO" id="GO:1901223">
    <property type="term" value="P:negative regulation of non-canonical NF-kappaB signal transduction"/>
    <property type="evidence" value="ECO:0007669"/>
    <property type="project" value="Ensembl"/>
</dbReference>
<dbReference type="GO" id="GO:1903427">
    <property type="term" value="P:negative regulation of reactive oxygen species biosynthetic process"/>
    <property type="evidence" value="ECO:0007669"/>
    <property type="project" value="Ensembl"/>
</dbReference>
<dbReference type="GO" id="GO:2001171">
    <property type="term" value="P:positive regulation of ATP biosynthetic process"/>
    <property type="evidence" value="ECO:0007669"/>
    <property type="project" value="Ensembl"/>
</dbReference>
<dbReference type="GO" id="GO:0010918">
    <property type="term" value="P:positive regulation of mitochondrial membrane potential"/>
    <property type="evidence" value="ECO:0007669"/>
    <property type="project" value="Ensembl"/>
</dbReference>
<dbReference type="GO" id="GO:0042776">
    <property type="term" value="P:proton motive force-driven mitochondrial ATP synthesis"/>
    <property type="evidence" value="ECO:0000303"/>
    <property type="project" value="ComplexPortal"/>
</dbReference>
<dbReference type="InterPro" id="IPR009423">
    <property type="entry name" value="NDUC2"/>
</dbReference>
<dbReference type="PANTHER" id="PTHR13099:SF0">
    <property type="entry name" value="NADH DEHYDROGENASE [UBIQUINONE] 1 SUBUNIT C2-RELATED"/>
    <property type="match status" value="1"/>
</dbReference>
<dbReference type="PANTHER" id="PTHR13099">
    <property type="entry name" value="NADH-UBIQUINONE OXIDOREDUCTASE SUBUNIT B14.5B"/>
    <property type="match status" value="1"/>
</dbReference>
<dbReference type="Pfam" id="PF06374">
    <property type="entry name" value="NDUF_C2"/>
    <property type="match status" value="1"/>
</dbReference>
<dbReference type="PIRSF" id="PIRSF017834">
    <property type="entry name" value="NADH-UbQ_OxRdtase_b14.5b"/>
    <property type="match status" value="1"/>
</dbReference>
<feature type="chain" id="PRO_0000118839" description="NADH dehydrogenase [ubiquinone] 1 subunit C2">
    <location>
        <begin position="1"/>
        <end position="120"/>
    </location>
</feature>
<feature type="transmembrane region" description="Helical" evidence="2">
    <location>
        <begin position="57"/>
        <end position="76"/>
    </location>
</feature>
<feature type="helix" evidence="7">
    <location>
        <begin position="2"/>
        <end position="4"/>
    </location>
</feature>
<feature type="helix" evidence="8">
    <location>
        <begin position="16"/>
        <end position="20"/>
    </location>
</feature>
<feature type="strand" evidence="9">
    <location>
        <begin position="26"/>
        <end position="28"/>
    </location>
</feature>
<feature type="helix" evidence="8">
    <location>
        <begin position="29"/>
        <end position="48"/>
    </location>
</feature>
<feature type="turn" evidence="8">
    <location>
        <begin position="53"/>
        <end position="55"/>
    </location>
</feature>
<feature type="helix" evidence="8">
    <location>
        <begin position="58"/>
        <end position="96"/>
    </location>
</feature>
<feature type="turn" evidence="8">
    <location>
        <begin position="98"/>
        <end position="100"/>
    </location>
</feature>
<feature type="turn" evidence="8">
    <location>
        <begin position="109"/>
        <end position="111"/>
    </location>
</feature>
<evidence type="ECO:0000250" key="1">
    <source>
        <dbReference type="UniProtKB" id="O95298"/>
    </source>
</evidence>
<evidence type="ECO:0000255" key="2"/>
<evidence type="ECO:0000269" key="3">
    <source>
    </source>
</evidence>
<evidence type="ECO:0000305" key="4"/>
<evidence type="ECO:0000312" key="5">
    <source>
        <dbReference type="MGI" id="MGI:1344370"/>
    </source>
</evidence>
<evidence type="ECO:0007744" key="6">
    <source>
        <dbReference type="PDB" id="8PW5"/>
    </source>
</evidence>
<evidence type="ECO:0007829" key="7">
    <source>
        <dbReference type="PDB" id="6ZTQ"/>
    </source>
</evidence>
<evidence type="ECO:0007829" key="8">
    <source>
        <dbReference type="PDB" id="8OM1"/>
    </source>
</evidence>
<evidence type="ECO:0007829" key="9">
    <source>
        <dbReference type="PDB" id="8RGR"/>
    </source>
</evidence>
<proteinExistence type="evidence at protein level"/>